<keyword id="KW-0963">Cytoplasm</keyword>
<keyword id="KW-0227">DNA damage</keyword>
<keyword id="KW-0228">DNA excision</keyword>
<keyword id="KW-0234">DNA repair</keyword>
<keyword id="KW-0267">Excision nuclease</keyword>
<keyword id="KW-1185">Reference proteome</keyword>
<keyword id="KW-0742">SOS response</keyword>
<organism>
    <name type="scientific">Lachnospira eligens (strain ATCC 27750 / DSM 3376 / VPI C15-48 / C15-B4)</name>
    <name type="common">Eubacterium eligens</name>
    <dbReference type="NCBI Taxonomy" id="515620"/>
    <lineage>
        <taxon>Bacteria</taxon>
        <taxon>Bacillati</taxon>
        <taxon>Bacillota</taxon>
        <taxon>Clostridia</taxon>
        <taxon>Lachnospirales</taxon>
        <taxon>Lachnospiraceae</taxon>
        <taxon>Lachnospira</taxon>
    </lineage>
</organism>
<comment type="function">
    <text evidence="1">The UvrABC repair system catalyzes the recognition and processing of DNA lesions. UvrC both incises the 5' and 3' sides of the lesion. The N-terminal half is responsible for the 3' incision and the C-terminal half is responsible for the 5' incision.</text>
</comment>
<comment type="subunit">
    <text evidence="1">Interacts with UvrB in an incision complex.</text>
</comment>
<comment type="subcellular location">
    <subcellularLocation>
        <location evidence="1">Cytoplasm</location>
    </subcellularLocation>
</comment>
<comment type="similarity">
    <text evidence="1">Belongs to the UvrC family.</text>
</comment>
<protein>
    <recommendedName>
        <fullName evidence="1">UvrABC system protein C</fullName>
        <shortName evidence="1">Protein UvrC</shortName>
    </recommendedName>
    <alternativeName>
        <fullName evidence="1">Excinuclease ABC subunit C</fullName>
    </alternativeName>
</protein>
<sequence>MFNLEEELKKLPAKPGVYIMHDKWDNIIYIGKAKVLKNRVRQYFQSNRNKSAKIVQMVSHIQYFEYIITDSELEALVLECNLIKEHRPKYNTMLKDDKSYPFIKITVGEEYPRVLFARKMKHGAGKYFGPYTSAAAVKDTIELLCKLYKVRTCNRNLPKDEGRDRPCLNYHIGQCDAPCQGYVSGEEYRRRIDEVVAFLNGDYKKIMDRLTTQMQEASEKMEYEEAARYRDLLMSVKQVAQKQKITADDVNDRDVIACASDGQDAVVQVFFIRQGKLLGRDHFHMKVAEGDSKSDIISEFMKQYYGGTPFIPNIIMVQYEIEDADTIAQWLSARKSRKVSIVTPKKGDKEKMVELAYKNAQLVLTQDAEKIKREESRTTGAMKEIAGWLGLGTLHRAEAYDISNTNGVESVGSMVVFEDGKPKKNDYRKFRIRTVKGPDDYKSMREVLTRRFTRGMREREGLEDSHGFSRYPDLIMMDGGRGQVNIALDVLKELGLNIPVCGMVKDDTHSTRGLYYNNIEIPIDKHSEGFKLITRVQDEAHRFAITYHRSLRDKAQVSSVLDSIEGIGPVRRKALMKHFLDIEKIRQASVDELMKADGITENVAENIYKFFH</sequence>
<feature type="chain" id="PRO_1000204120" description="UvrABC system protein C">
    <location>
        <begin position="1"/>
        <end position="612"/>
    </location>
</feature>
<feature type="domain" description="GIY-YIG" evidence="1">
    <location>
        <begin position="13"/>
        <end position="92"/>
    </location>
</feature>
<feature type="domain" description="UVR" evidence="1">
    <location>
        <begin position="204"/>
        <end position="239"/>
    </location>
</feature>
<accession>C4Z4U3</accession>
<gene>
    <name evidence="1" type="primary">uvrC</name>
    <name type="ordered locus">EUBELI_01999</name>
</gene>
<evidence type="ECO:0000255" key="1">
    <source>
        <dbReference type="HAMAP-Rule" id="MF_00203"/>
    </source>
</evidence>
<name>UVRC_LACE2</name>
<reference key="1">
    <citation type="journal article" date="2009" name="Proc. Natl. Acad. Sci. U.S.A.">
        <title>Characterizing a model human gut microbiota composed of members of its two dominant bacterial phyla.</title>
        <authorList>
            <person name="Mahowald M.A."/>
            <person name="Rey F.E."/>
            <person name="Seedorf H."/>
            <person name="Turnbaugh P.J."/>
            <person name="Fulton R.S."/>
            <person name="Wollam A."/>
            <person name="Shah N."/>
            <person name="Wang C."/>
            <person name="Magrini V."/>
            <person name="Wilson R.K."/>
            <person name="Cantarel B.L."/>
            <person name="Coutinho P.M."/>
            <person name="Henrissat B."/>
            <person name="Crock L.W."/>
            <person name="Russell A."/>
            <person name="Verberkmoes N.C."/>
            <person name="Hettich R.L."/>
            <person name="Gordon J.I."/>
        </authorList>
    </citation>
    <scope>NUCLEOTIDE SEQUENCE [LARGE SCALE GENOMIC DNA]</scope>
    <source>
        <strain>ATCC 27750 / DSM 3376 / VPI C15-48 / C15-B4</strain>
    </source>
</reference>
<dbReference type="EMBL" id="CP001104">
    <property type="protein sequence ID" value="ACR72982.1"/>
    <property type="molecule type" value="Genomic_DNA"/>
</dbReference>
<dbReference type="RefSeq" id="WP_012740214.1">
    <property type="nucleotide sequence ID" value="NC_012778.1"/>
</dbReference>
<dbReference type="SMR" id="C4Z4U3"/>
<dbReference type="STRING" id="515620.EUBELI_01999"/>
<dbReference type="GeneID" id="41356641"/>
<dbReference type="KEGG" id="eel:EUBELI_01999"/>
<dbReference type="eggNOG" id="COG0322">
    <property type="taxonomic scope" value="Bacteria"/>
</dbReference>
<dbReference type="HOGENOM" id="CLU_014841_3_2_9"/>
<dbReference type="Proteomes" id="UP000001476">
    <property type="component" value="Chromosome"/>
</dbReference>
<dbReference type="GO" id="GO:0005737">
    <property type="term" value="C:cytoplasm"/>
    <property type="evidence" value="ECO:0007669"/>
    <property type="project" value="UniProtKB-SubCell"/>
</dbReference>
<dbReference type="GO" id="GO:0009380">
    <property type="term" value="C:excinuclease repair complex"/>
    <property type="evidence" value="ECO:0007669"/>
    <property type="project" value="InterPro"/>
</dbReference>
<dbReference type="GO" id="GO:0003677">
    <property type="term" value="F:DNA binding"/>
    <property type="evidence" value="ECO:0007669"/>
    <property type="project" value="UniProtKB-UniRule"/>
</dbReference>
<dbReference type="GO" id="GO:0009381">
    <property type="term" value="F:excinuclease ABC activity"/>
    <property type="evidence" value="ECO:0007669"/>
    <property type="project" value="UniProtKB-UniRule"/>
</dbReference>
<dbReference type="GO" id="GO:0006289">
    <property type="term" value="P:nucleotide-excision repair"/>
    <property type="evidence" value="ECO:0007669"/>
    <property type="project" value="UniProtKB-UniRule"/>
</dbReference>
<dbReference type="GO" id="GO:0009432">
    <property type="term" value="P:SOS response"/>
    <property type="evidence" value="ECO:0007669"/>
    <property type="project" value="UniProtKB-UniRule"/>
</dbReference>
<dbReference type="CDD" id="cd10434">
    <property type="entry name" value="GIY-YIG_UvrC_Cho"/>
    <property type="match status" value="1"/>
</dbReference>
<dbReference type="FunFam" id="3.40.1440.10:FF:000001">
    <property type="entry name" value="UvrABC system protein C"/>
    <property type="match status" value="1"/>
</dbReference>
<dbReference type="Gene3D" id="1.10.150.20">
    <property type="entry name" value="5' to 3' exonuclease, C-terminal subdomain"/>
    <property type="match status" value="1"/>
</dbReference>
<dbReference type="Gene3D" id="3.40.1440.10">
    <property type="entry name" value="GIY-YIG endonuclease"/>
    <property type="match status" value="1"/>
</dbReference>
<dbReference type="Gene3D" id="4.10.860.10">
    <property type="entry name" value="UVR domain"/>
    <property type="match status" value="1"/>
</dbReference>
<dbReference type="Gene3D" id="3.30.420.340">
    <property type="entry name" value="UvrC, RNAse H endonuclease domain"/>
    <property type="match status" value="1"/>
</dbReference>
<dbReference type="HAMAP" id="MF_00203">
    <property type="entry name" value="UvrC"/>
    <property type="match status" value="1"/>
</dbReference>
<dbReference type="InterPro" id="IPR000305">
    <property type="entry name" value="GIY-YIG_endonuc"/>
</dbReference>
<dbReference type="InterPro" id="IPR035901">
    <property type="entry name" value="GIY-YIG_endonuc_sf"/>
</dbReference>
<dbReference type="InterPro" id="IPR047296">
    <property type="entry name" value="GIY-YIG_UvrC_Cho"/>
</dbReference>
<dbReference type="InterPro" id="IPR003583">
    <property type="entry name" value="Hlx-hairpin-Hlx_DNA-bd_motif"/>
</dbReference>
<dbReference type="InterPro" id="IPR010994">
    <property type="entry name" value="RuvA_2-like"/>
</dbReference>
<dbReference type="InterPro" id="IPR001943">
    <property type="entry name" value="UVR_dom"/>
</dbReference>
<dbReference type="InterPro" id="IPR036876">
    <property type="entry name" value="UVR_dom_sf"/>
</dbReference>
<dbReference type="InterPro" id="IPR050066">
    <property type="entry name" value="UvrABC_protein_C"/>
</dbReference>
<dbReference type="InterPro" id="IPR004791">
    <property type="entry name" value="UvrC"/>
</dbReference>
<dbReference type="InterPro" id="IPR001162">
    <property type="entry name" value="UvrC_RNase_H_dom"/>
</dbReference>
<dbReference type="InterPro" id="IPR038476">
    <property type="entry name" value="UvrC_RNase_H_dom_sf"/>
</dbReference>
<dbReference type="NCBIfam" id="NF001824">
    <property type="entry name" value="PRK00558.1-5"/>
    <property type="match status" value="1"/>
</dbReference>
<dbReference type="NCBIfam" id="TIGR00194">
    <property type="entry name" value="uvrC"/>
    <property type="match status" value="1"/>
</dbReference>
<dbReference type="PANTHER" id="PTHR30562:SF1">
    <property type="entry name" value="UVRABC SYSTEM PROTEIN C"/>
    <property type="match status" value="1"/>
</dbReference>
<dbReference type="PANTHER" id="PTHR30562">
    <property type="entry name" value="UVRC/OXIDOREDUCTASE"/>
    <property type="match status" value="1"/>
</dbReference>
<dbReference type="Pfam" id="PF01541">
    <property type="entry name" value="GIY-YIG"/>
    <property type="match status" value="1"/>
</dbReference>
<dbReference type="Pfam" id="PF14520">
    <property type="entry name" value="HHH_5"/>
    <property type="match status" value="1"/>
</dbReference>
<dbReference type="Pfam" id="PF02151">
    <property type="entry name" value="UVR"/>
    <property type="match status" value="1"/>
</dbReference>
<dbReference type="Pfam" id="PF22920">
    <property type="entry name" value="UvrC_RNaseH"/>
    <property type="match status" value="1"/>
</dbReference>
<dbReference type="Pfam" id="PF08459">
    <property type="entry name" value="UvrC_RNaseH_dom"/>
    <property type="match status" value="1"/>
</dbReference>
<dbReference type="SMART" id="SM00465">
    <property type="entry name" value="GIYc"/>
    <property type="match status" value="1"/>
</dbReference>
<dbReference type="SMART" id="SM00278">
    <property type="entry name" value="HhH1"/>
    <property type="match status" value="2"/>
</dbReference>
<dbReference type="SUPFAM" id="SSF46600">
    <property type="entry name" value="C-terminal UvrC-binding domain of UvrB"/>
    <property type="match status" value="1"/>
</dbReference>
<dbReference type="SUPFAM" id="SSF82771">
    <property type="entry name" value="GIY-YIG endonuclease"/>
    <property type="match status" value="1"/>
</dbReference>
<dbReference type="SUPFAM" id="SSF47781">
    <property type="entry name" value="RuvA domain 2-like"/>
    <property type="match status" value="1"/>
</dbReference>
<dbReference type="PROSITE" id="PS50164">
    <property type="entry name" value="GIY_YIG"/>
    <property type="match status" value="1"/>
</dbReference>
<dbReference type="PROSITE" id="PS50151">
    <property type="entry name" value="UVR"/>
    <property type="match status" value="1"/>
</dbReference>
<dbReference type="PROSITE" id="PS50165">
    <property type="entry name" value="UVRC"/>
    <property type="match status" value="1"/>
</dbReference>
<proteinExistence type="inferred from homology"/>